<sequence>MVTTTEKTNIGYIRQVIGPVVDVEFPAGKLPQIYNALVIKGKNEAGQDLSVTCEVQQLLGDRKVRAVSMSTTDGLVRGLEVIDTGAPISVPVGEATLGRIFNVLGEPVDELGPVNAATTSPIHRDAPKLTDLETKPKVFETGIKVIDLLAPYRQGGKIGLFGGAGVGKTVLIQELINNIAKEHGGVSVFGGVGERTREGNDLYQEFKESGVIDEKNIANSKVALVYGQMNEPPGARMRVGLSALTMAEHFRDVNKQDVLLFIDNIFRFVQAGSEVSALLGRMPSAVGYQPTLGTDVGQLQERITSTLEGSITSIQAVYVPADDLTDPAPATTFAHLDATTVLSRGLASKGIYPAVDPLDSTSTMLQPSIVGEEHYRTARAVQSTLQRYKELQDIIAILGLDELSEEDRQTVARARKIEKFLSQPFFVAEVFTGSPGKYVKLEDTISGFNRILNGELDDLPEQAFYLVGDIQEAIEKGAKLKAES</sequence>
<proteinExistence type="inferred from homology"/>
<organism>
    <name type="scientific">Synechococcus elongatus (strain ATCC 33912 / PCC 7942 / FACHB-805)</name>
    <name type="common">Anacystis nidulans R2</name>
    <dbReference type="NCBI Taxonomy" id="1140"/>
    <lineage>
        <taxon>Bacteria</taxon>
        <taxon>Bacillati</taxon>
        <taxon>Cyanobacteriota</taxon>
        <taxon>Cyanophyceae</taxon>
        <taxon>Synechococcales</taxon>
        <taxon>Synechococcaceae</taxon>
        <taxon>Synechococcus</taxon>
    </lineage>
</organism>
<reference key="1">
    <citation type="submission" date="2005-08" db="EMBL/GenBank/DDBJ databases">
        <title>Complete sequence of chromosome 1 of Synechococcus elongatus PCC 7942.</title>
        <authorList>
            <consortium name="US DOE Joint Genome Institute"/>
            <person name="Copeland A."/>
            <person name="Lucas S."/>
            <person name="Lapidus A."/>
            <person name="Barry K."/>
            <person name="Detter J.C."/>
            <person name="Glavina T."/>
            <person name="Hammon N."/>
            <person name="Israni S."/>
            <person name="Pitluck S."/>
            <person name="Schmutz J."/>
            <person name="Larimer F."/>
            <person name="Land M."/>
            <person name="Kyrpides N."/>
            <person name="Lykidis A."/>
            <person name="Golden S."/>
            <person name="Richardson P."/>
        </authorList>
    </citation>
    <scope>NUCLEOTIDE SEQUENCE [LARGE SCALE GENOMIC DNA]</scope>
    <source>
        <strain>ATCC 33912 / PCC 7942 / FACHB-805</strain>
    </source>
</reference>
<accession>Q31KS4</accession>
<protein>
    <recommendedName>
        <fullName evidence="1">ATP synthase subunit beta</fullName>
        <ecNumber evidence="1">7.1.2.2</ecNumber>
    </recommendedName>
    <alternativeName>
        <fullName evidence="1">ATP synthase F1 sector subunit beta</fullName>
    </alternativeName>
    <alternativeName>
        <fullName evidence="1">F-ATPase subunit beta</fullName>
    </alternativeName>
</protein>
<evidence type="ECO:0000255" key="1">
    <source>
        <dbReference type="HAMAP-Rule" id="MF_01347"/>
    </source>
</evidence>
<keyword id="KW-0066">ATP synthesis</keyword>
<keyword id="KW-0067">ATP-binding</keyword>
<keyword id="KW-0139">CF(1)</keyword>
<keyword id="KW-0375">Hydrogen ion transport</keyword>
<keyword id="KW-0406">Ion transport</keyword>
<keyword id="KW-0472">Membrane</keyword>
<keyword id="KW-0547">Nucleotide-binding</keyword>
<keyword id="KW-1185">Reference proteome</keyword>
<keyword id="KW-0793">Thylakoid</keyword>
<keyword id="KW-1278">Translocase</keyword>
<keyword id="KW-0813">Transport</keyword>
<name>ATPB_SYNE7</name>
<feature type="chain" id="PRO_0000254409" description="ATP synthase subunit beta">
    <location>
        <begin position="1"/>
        <end position="484"/>
    </location>
</feature>
<feature type="binding site" evidence="1">
    <location>
        <begin position="162"/>
        <end position="169"/>
    </location>
    <ligand>
        <name>ATP</name>
        <dbReference type="ChEBI" id="CHEBI:30616"/>
    </ligand>
</feature>
<dbReference type="EC" id="7.1.2.2" evidence="1"/>
<dbReference type="EMBL" id="CP000100">
    <property type="protein sequence ID" value="ABB58345.1"/>
    <property type="molecule type" value="Genomic_DNA"/>
</dbReference>
<dbReference type="RefSeq" id="WP_011244097.1">
    <property type="nucleotide sequence ID" value="NZ_JACJTX010000001.1"/>
</dbReference>
<dbReference type="SMR" id="Q31KS4"/>
<dbReference type="STRING" id="1140.Synpcc7942_2315"/>
<dbReference type="PaxDb" id="1140-Synpcc7942_2315"/>
<dbReference type="GeneID" id="72431202"/>
<dbReference type="KEGG" id="syf:Synpcc7942_2315"/>
<dbReference type="eggNOG" id="COG0055">
    <property type="taxonomic scope" value="Bacteria"/>
</dbReference>
<dbReference type="HOGENOM" id="CLU_022398_0_2_3"/>
<dbReference type="OrthoDB" id="9801639at2"/>
<dbReference type="BioCyc" id="MetaCyc:SYNPCC7942_2315-MONOMER"/>
<dbReference type="BioCyc" id="SYNEL:SYNPCC7942_2315-MONOMER"/>
<dbReference type="Proteomes" id="UP000889800">
    <property type="component" value="Chromosome"/>
</dbReference>
<dbReference type="GO" id="GO:0031676">
    <property type="term" value="C:plasma membrane-derived thylakoid membrane"/>
    <property type="evidence" value="ECO:0007669"/>
    <property type="project" value="UniProtKB-SubCell"/>
</dbReference>
<dbReference type="GO" id="GO:0045259">
    <property type="term" value="C:proton-transporting ATP synthase complex"/>
    <property type="evidence" value="ECO:0007669"/>
    <property type="project" value="UniProtKB-KW"/>
</dbReference>
<dbReference type="GO" id="GO:0005524">
    <property type="term" value="F:ATP binding"/>
    <property type="evidence" value="ECO:0007669"/>
    <property type="project" value="UniProtKB-UniRule"/>
</dbReference>
<dbReference type="GO" id="GO:0016887">
    <property type="term" value="F:ATP hydrolysis activity"/>
    <property type="evidence" value="ECO:0007669"/>
    <property type="project" value="InterPro"/>
</dbReference>
<dbReference type="GO" id="GO:0046933">
    <property type="term" value="F:proton-transporting ATP synthase activity, rotational mechanism"/>
    <property type="evidence" value="ECO:0007669"/>
    <property type="project" value="UniProtKB-UniRule"/>
</dbReference>
<dbReference type="CDD" id="cd18110">
    <property type="entry name" value="ATP-synt_F1_beta_C"/>
    <property type="match status" value="1"/>
</dbReference>
<dbReference type="CDD" id="cd18115">
    <property type="entry name" value="ATP-synt_F1_beta_N"/>
    <property type="match status" value="1"/>
</dbReference>
<dbReference type="CDD" id="cd01133">
    <property type="entry name" value="F1-ATPase_beta_CD"/>
    <property type="match status" value="1"/>
</dbReference>
<dbReference type="FunFam" id="1.10.1140.10:FF:000001">
    <property type="entry name" value="ATP synthase subunit beta"/>
    <property type="match status" value="1"/>
</dbReference>
<dbReference type="FunFam" id="3.40.50.300:FF:000004">
    <property type="entry name" value="ATP synthase subunit beta"/>
    <property type="match status" value="1"/>
</dbReference>
<dbReference type="FunFam" id="2.40.10.170:FF:000002">
    <property type="entry name" value="ATP synthase subunit beta, chloroplastic"/>
    <property type="match status" value="1"/>
</dbReference>
<dbReference type="Gene3D" id="2.40.10.170">
    <property type="match status" value="1"/>
</dbReference>
<dbReference type="Gene3D" id="1.10.1140.10">
    <property type="entry name" value="Bovine Mitochondrial F1-atpase, Atp Synthase Beta Chain, Chain D, domain 3"/>
    <property type="match status" value="1"/>
</dbReference>
<dbReference type="Gene3D" id="3.40.50.300">
    <property type="entry name" value="P-loop containing nucleotide triphosphate hydrolases"/>
    <property type="match status" value="1"/>
</dbReference>
<dbReference type="HAMAP" id="MF_01347">
    <property type="entry name" value="ATP_synth_beta_bact"/>
    <property type="match status" value="1"/>
</dbReference>
<dbReference type="InterPro" id="IPR003593">
    <property type="entry name" value="AAA+_ATPase"/>
</dbReference>
<dbReference type="InterPro" id="IPR055190">
    <property type="entry name" value="ATP-synt_VA_C"/>
</dbReference>
<dbReference type="InterPro" id="IPR005722">
    <property type="entry name" value="ATP_synth_F1_bsu"/>
</dbReference>
<dbReference type="InterPro" id="IPR020003">
    <property type="entry name" value="ATPase_a/bsu_AS"/>
</dbReference>
<dbReference type="InterPro" id="IPR050053">
    <property type="entry name" value="ATPase_alpha/beta_chains"/>
</dbReference>
<dbReference type="InterPro" id="IPR004100">
    <property type="entry name" value="ATPase_F1/V1/A1_a/bsu_N"/>
</dbReference>
<dbReference type="InterPro" id="IPR036121">
    <property type="entry name" value="ATPase_F1/V1/A1_a/bsu_N_sf"/>
</dbReference>
<dbReference type="InterPro" id="IPR000194">
    <property type="entry name" value="ATPase_F1/V1/A1_a/bsu_nucl-bd"/>
</dbReference>
<dbReference type="InterPro" id="IPR024034">
    <property type="entry name" value="ATPase_F1/V1_b/a_C"/>
</dbReference>
<dbReference type="InterPro" id="IPR027417">
    <property type="entry name" value="P-loop_NTPase"/>
</dbReference>
<dbReference type="NCBIfam" id="TIGR01039">
    <property type="entry name" value="atpD"/>
    <property type="match status" value="1"/>
</dbReference>
<dbReference type="PANTHER" id="PTHR15184">
    <property type="entry name" value="ATP SYNTHASE"/>
    <property type="match status" value="1"/>
</dbReference>
<dbReference type="PANTHER" id="PTHR15184:SF71">
    <property type="entry name" value="ATP SYNTHASE SUBUNIT BETA, MITOCHONDRIAL"/>
    <property type="match status" value="1"/>
</dbReference>
<dbReference type="Pfam" id="PF00006">
    <property type="entry name" value="ATP-synt_ab"/>
    <property type="match status" value="1"/>
</dbReference>
<dbReference type="Pfam" id="PF02874">
    <property type="entry name" value="ATP-synt_ab_N"/>
    <property type="match status" value="1"/>
</dbReference>
<dbReference type="Pfam" id="PF22919">
    <property type="entry name" value="ATP-synt_VA_C"/>
    <property type="match status" value="1"/>
</dbReference>
<dbReference type="SMART" id="SM00382">
    <property type="entry name" value="AAA"/>
    <property type="match status" value="1"/>
</dbReference>
<dbReference type="SUPFAM" id="SSF47917">
    <property type="entry name" value="C-terminal domain of alpha and beta subunits of F1 ATP synthase"/>
    <property type="match status" value="1"/>
</dbReference>
<dbReference type="SUPFAM" id="SSF50615">
    <property type="entry name" value="N-terminal domain of alpha and beta subunits of F1 ATP synthase"/>
    <property type="match status" value="1"/>
</dbReference>
<dbReference type="SUPFAM" id="SSF52540">
    <property type="entry name" value="P-loop containing nucleoside triphosphate hydrolases"/>
    <property type="match status" value="1"/>
</dbReference>
<dbReference type="PROSITE" id="PS00152">
    <property type="entry name" value="ATPASE_ALPHA_BETA"/>
    <property type="match status" value="1"/>
</dbReference>
<gene>
    <name evidence="1" type="primary">atpD</name>
    <name evidence="1" type="synonym">atpB</name>
    <name type="ordered locus">Synpcc7942_2315</name>
</gene>
<comment type="function">
    <text evidence="1">Produces ATP from ADP in the presence of a proton gradient across the membrane. The catalytic sites are hosted primarily by the beta subunits.</text>
</comment>
<comment type="catalytic activity">
    <reaction evidence="1">
        <text>ATP + H2O + 4 H(+)(in) = ADP + phosphate + 5 H(+)(out)</text>
        <dbReference type="Rhea" id="RHEA:57720"/>
        <dbReference type="ChEBI" id="CHEBI:15377"/>
        <dbReference type="ChEBI" id="CHEBI:15378"/>
        <dbReference type="ChEBI" id="CHEBI:30616"/>
        <dbReference type="ChEBI" id="CHEBI:43474"/>
        <dbReference type="ChEBI" id="CHEBI:456216"/>
        <dbReference type="EC" id="7.1.2.2"/>
    </reaction>
</comment>
<comment type="subunit">
    <text evidence="1">F-type ATPases have 2 components, CF(1) - the catalytic core - and CF(0) - the membrane proton channel. CF(1) has five subunits: alpha(3), beta(3), gamma(1), delta(1), epsilon(1). CF(0) has four main subunits: a(1), b(1), b'(1) and c(9-12).</text>
</comment>
<comment type="subcellular location">
    <subcellularLocation>
        <location evidence="1">Cellular thylakoid membrane</location>
        <topology evidence="1">Peripheral membrane protein</topology>
    </subcellularLocation>
</comment>
<comment type="similarity">
    <text evidence="1">Belongs to the ATPase alpha/beta chains family.</text>
</comment>